<name>TMCAL_LISMF</name>
<organism>
    <name type="scientific">Listeria monocytogenes serotype 4b (strain F2365)</name>
    <dbReference type="NCBI Taxonomy" id="265669"/>
    <lineage>
        <taxon>Bacteria</taxon>
        <taxon>Bacillati</taxon>
        <taxon>Bacillota</taxon>
        <taxon>Bacilli</taxon>
        <taxon>Bacillales</taxon>
        <taxon>Listeriaceae</taxon>
        <taxon>Listeria</taxon>
    </lineage>
</organism>
<evidence type="ECO:0000255" key="1">
    <source>
        <dbReference type="HAMAP-Rule" id="MF_01539"/>
    </source>
</evidence>
<dbReference type="EC" id="6.3.4.-" evidence="1"/>
<dbReference type="EMBL" id="AE017262">
    <property type="protein sequence ID" value="AAT04850.1"/>
    <property type="molecule type" value="Genomic_DNA"/>
</dbReference>
<dbReference type="RefSeq" id="WP_010958998.1">
    <property type="nucleotide sequence ID" value="NC_002973.6"/>
</dbReference>
<dbReference type="SMR" id="Q71XW5"/>
<dbReference type="KEGG" id="lmf:LMOf2365_2080"/>
<dbReference type="HOGENOM" id="CLU_038915_0_2_9"/>
<dbReference type="GO" id="GO:0005737">
    <property type="term" value="C:cytoplasm"/>
    <property type="evidence" value="ECO:0007669"/>
    <property type="project" value="UniProtKB-SubCell"/>
</dbReference>
<dbReference type="GO" id="GO:0005524">
    <property type="term" value="F:ATP binding"/>
    <property type="evidence" value="ECO:0007669"/>
    <property type="project" value="UniProtKB-KW"/>
</dbReference>
<dbReference type="GO" id="GO:0016879">
    <property type="term" value="F:ligase activity, forming carbon-nitrogen bonds"/>
    <property type="evidence" value="ECO:0007669"/>
    <property type="project" value="UniProtKB-UniRule"/>
</dbReference>
<dbReference type="GO" id="GO:0000049">
    <property type="term" value="F:tRNA binding"/>
    <property type="evidence" value="ECO:0007669"/>
    <property type="project" value="UniProtKB-KW"/>
</dbReference>
<dbReference type="GO" id="GO:0006400">
    <property type="term" value="P:tRNA modification"/>
    <property type="evidence" value="ECO:0007669"/>
    <property type="project" value="UniProtKB-UniRule"/>
</dbReference>
<dbReference type="Gene3D" id="3.40.50.620">
    <property type="entry name" value="HUPs"/>
    <property type="match status" value="1"/>
</dbReference>
<dbReference type="HAMAP" id="MF_01539">
    <property type="entry name" value="TmcAL"/>
    <property type="match status" value="1"/>
</dbReference>
<dbReference type="InterPro" id="IPR014729">
    <property type="entry name" value="Rossmann-like_a/b/a_fold"/>
</dbReference>
<dbReference type="InterPro" id="IPR008513">
    <property type="entry name" value="tRNA(Met)_cyd_acetate_ligase"/>
</dbReference>
<dbReference type="NCBIfam" id="NF010191">
    <property type="entry name" value="PRK13670.1"/>
    <property type="match status" value="1"/>
</dbReference>
<dbReference type="PANTHER" id="PTHR37825">
    <property type="entry name" value="TRNA(MET) CYTIDINE ACETATE LIGASE"/>
    <property type="match status" value="1"/>
</dbReference>
<dbReference type="PANTHER" id="PTHR37825:SF1">
    <property type="entry name" value="TRNA(MET) CYTIDINE ACETATE LIGASE"/>
    <property type="match status" value="1"/>
</dbReference>
<dbReference type="Pfam" id="PF05636">
    <property type="entry name" value="HIGH_NTase1"/>
    <property type="match status" value="1"/>
</dbReference>
<dbReference type="SUPFAM" id="SSF52374">
    <property type="entry name" value="Nucleotidylyl transferase"/>
    <property type="match status" value="1"/>
</dbReference>
<sequence>MKATGIVVEYNPFHNGHKLHLNKARELTQADVVIAVMSGSFVQRGEPAILPKWERTRMALAAGVDMVVELPVSFATQHATIFAEEAVRILDAIHVDTLFFGSEHGVAEDFTLAAKKVVDNEARFDEAIQLALVDKKTSYARAYTEAFKKLFGQNLLDITKPNNILGFHYALAAQKQNPSISLQTIPREHAGYHDEEANHDQIASATAIRKLILAGKLEESSHYLPASSIAILRNYEGPFLSWTDYWSFLQYRLIQAGSEELEGIRGVSEGIQNRMQQAATKAQNFSDFIELTKTKRYSNARLQRTALQILLNARSQTSSPYIRILGMNKTGQQYLSLHKKNISLPIITTVSKAPAGLLEEELRATNIYTLAKGLENYQAGDFHIPPILTL</sequence>
<keyword id="KW-0067">ATP-binding</keyword>
<keyword id="KW-0963">Cytoplasm</keyword>
<keyword id="KW-0436">Ligase</keyword>
<keyword id="KW-0547">Nucleotide-binding</keyword>
<keyword id="KW-0694">RNA-binding</keyword>
<keyword id="KW-0819">tRNA processing</keyword>
<keyword id="KW-0820">tRNA-binding</keyword>
<reference key="1">
    <citation type="journal article" date="2004" name="Nucleic Acids Res.">
        <title>Whole genome comparisons of serotype 4b and 1/2a strains of the food-borne pathogen Listeria monocytogenes reveal new insights into the core genome components of this species.</title>
        <authorList>
            <person name="Nelson K.E."/>
            <person name="Fouts D.E."/>
            <person name="Mongodin E.F."/>
            <person name="Ravel J."/>
            <person name="DeBoy R.T."/>
            <person name="Kolonay J.F."/>
            <person name="Rasko D.A."/>
            <person name="Angiuoli S.V."/>
            <person name="Gill S.R."/>
            <person name="Paulsen I.T."/>
            <person name="Peterson J.D."/>
            <person name="White O."/>
            <person name="Nelson W.C."/>
            <person name="Nierman W.C."/>
            <person name="Beanan M.J."/>
            <person name="Brinkac L.M."/>
            <person name="Daugherty S.C."/>
            <person name="Dodson R.J."/>
            <person name="Durkin A.S."/>
            <person name="Madupu R."/>
            <person name="Haft D.H."/>
            <person name="Selengut J."/>
            <person name="Van Aken S.E."/>
            <person name="Khouri H.M."/>
            <person name="Fedorova N."/>
            <person name="Forberger H.A."/>
            <person name="Tran B."/>
            <person name="Kathariou S."/>
            <person name="Wonderling L.D."/>
            <person name="Uhlich G.A."/>
            <person name="Bayles D.O."/>
            <person name="Luchansky J.B."/>
            <person name="Fraser C.M."/>
        </authorList>
    </citation>
    <scope>NUCLEOTIDE SEQUENCE [LARGE SCALE GENOMIC DNA]</scope>
    <source>
        <strain>F2365</strain>
    </source>
</reference>
<comment type="function">
    <text evidence="1">Catalyzes the formation of N(4)-acetylcytidine (ac(4)C) at the wobble position of elongator tRNA(Met), using acetate and ATP as substrates. First activates an acetate ion to form acetyladenylate (Ac-AMP) and then transfers the acetyl group to tRNA to form ac(4)C34.</text>
</comment>
<comment type="catalytic activity">
    <reaction evidence="1">
        <text>cytidine(34) in elongator tRNA(Met) + acetate + ATP = N(4)-acetylcytidine(34) in elongator tRNA(Met) + AMP + diphosphate</text>
        <dbReference type="Rhea" id="RHEA:58144"/>
        <dbReference type="Rhea" id="RHEA-COMP:10693"/>
        <dbReference type="Rhea" id="RHEA-COMP:10694"/>
        <dbReference type="ChEBI" id="CHEBI:30089"/>
        <dbReference type="ChEBI" id="CHEBI:30616"/>
        <dbReference type="ChEBI" id="CHEBI:33019"/>
        <dbReference type="ChEBI" id="CHEBI:74900"/>
        <dbReference type="ChEBI" id="CHEBI:82748"/>
        <dbReference type="ChEBI" id="CHEBI:456215"/>
    </reaction>
</comment>
<comment type="subcellular location">
    <subcellularLocation>
        <location evidence="1">Cytoplasm</location>
    </subcellularLocation>
</comment>
<comment type="similarity">
    <text evidence="1">Belongs to the TmcAL family.</text>
</comment>
<accession>Q71XW5</accession>
<feature type="chain" id="PRO_0000147172" description="tRNA(Met) cytidine acetate ligase">
    <location>
        <begin position="1"/>
        <end position="390"/>
    </location>
</feature>
<feature type="binding site" evidence="1">
    <location>
        <begin position="7"/>
        <end position="20"/>
    </location>
    <ligand>
        <name>ATP</name>
        <dbReference type="ChEBI" id="CHEBI:30616"/>
    </ligand>
</feature>
<feature type="binding site" evidence="1">
    <location>
        <position position="101"/>
    </location>
    <ligand>
        <name>ATP</name>
        <dbReference type="ChEBI" id="CHEBI:30616"/>
    </ligand>
</feature>
<feature type="binding site" evidence="1">
    <location>
        <position position="162"/>
    </location>
    <ligand>
        <name>ATP</name>
        <dbReference type="ChEBI" id="CHEBI:30616"/>
    </ligand>
</feature>
<feature type="binding site" evidence="1">
    <location>
        <position position="187"/>
    </location>
    <ligand>
        <name>ATP</name>
        <dbReference type="ChEBI" id="CHEBI:30616"/>
    </ligand>
</feature>
<protein>
    <recommendedName>
        <fullName evidence="1">tRNA(Met) cytidine acetate ligase</fullName>
        <ecNumber evidence="1">6.3.4.-</ecNumber>
    </recommendedName>
</protein>
<proteinExistence type="inferred from homology"/>
<gene>
    <name evidence="1" type="primary">tmcAL</name>
    <name type="ordered locus">LMOf2365_2080</name>
</gene>